<evidence type="ECO:0000255" key="1">
    <source>
        <dbReference type="HAMAP-Rule" id="MF_00233"/>
    </source>
</evidence>
<comment type="function">
    <text evidence="1">Plays a critical role in the incorporation of lipoproteins in the outer membrane after they are released by the LolA protein.</text>
</comment>
<comment type="subunit">
    <text evidence="1">Monomer.</text>
</comment>
<comment type="subcellular location">
    <subcellularLocation>
        <location evidence="1">Cell outer membrane</location>
        <topology evidence="1">Lipid-anchor</topology>
    </subcellularLocation>
</comment>
<comment type="similarity">
    <text evidence="1">Belongs to the LolB family.</text>
</comment>
<accession>A4XR58</accession>
<keyword id="KW-0998">Cell outer membrane</keyword>
<keyword id="KW-0143">Chaperone</keyword>
<keyword id="KW-0449">Lipoprotein</keyword>
<keyword id="KW-0472">Membrane</keyword>
<keyword id="KW-0564">Palmitate</keyword>
<keyword id="KW-0653">Protein transport</keyword>
<keyword id="KW-0732">Signal</keyword>
<keyword id="KW-0813">Transport</keyword>
<gene>
    <name evidence="1" type="primary">lolB</name>
    <name type="ordered locus">Pmen_1057</name>
</gene>
<name>LOLB_ECTM1</name>
<protein>
    <recommendedName>
        <fullName evidence="1">Outer-membrane lipoprotein LolB</fullName>
    </recommendedName>
</protein>
<reference key="1">
    <citation type="submission" date="2007-04" db="EMBL/GenBank/DDBJ databases">
        <title>Complete sequence of Pseudomonas mendocina ymp.</title>
        <authorList>
            <consortium name="US DOE Joint Genome Institute"/>
            <person name="Copeland A."/>
            <person name="Lucas S."/>
            <person name="Lapidus A."/>
            <person name="Barry K."/>
            <person name="Glavina del Rio T."/>
            <person name="Dalin E."/>
            <person name="Tice H."/>
            <person name="Pitluck S."/>
            <person name="Kiss H."/>
            <person name="Brettin T."/>
            <person name="Detter J.C."/>
            <person name="Bruce D."/>
            <person name="Han C."/>
            <person name="Schmutz J."/>
            <person name="Larimer F."/>
            <person name="Land M."/>
            <person name="Hauser L."/>
            <person name="Kyrpides N."/>
            <person name="Mikhailova N."/>
            <person name="Hersman L."/>
            <person name="Dubois J."/>
            <person name="Maurice P."/>
            <person name="Richardson P."/>
        </authorList>
    </citation>
    <scope>NUCLEOTIDE SEQUENCE [LARGE SCALE GENOMIC DNA]</scope>
    <source>
        <strain>ymp</strain>
    </source>
</reference>
<dbReference type="EMBL" id="CP000680">
    <property type="protein sequence ID" value="ABP83824.1"/>
    <property type="molecule type" value="Genomic_DNA"/>
</dbReference>
<dbReference type="SMR" id="A4XR58"/>
<dbReference type="STRING" id="399739.Pmen_1057"/>
<dbReference type="KEGG" id="pmy:Pmen_1057"/>
<dbReference type="eggNOG" id="COG3017">
    <property type="taxonomic scope" value="Bacteria"/>
</dbReference>
<dbReference type="HOGENOM" id="CLU_092816_2_1_6"/>
<dbReference type="GO" id="GO:0009279">
    <property type="term" value="C:cell outer membrane"/>
    <property type="evidence" value="ECO:0007669"/>
    <property type="project" value="UniProtKB-SubCell"/>
</dbReference>
<dbReference type="GO" id="GO:0044874">
    <property type="term" value="P:lipoprotein localization to outer membrane"/>
    <property type="evidence" value="ECO:0007669"/>
    <property type="project" value="UniProtKB-UniRule"/>
</dbReference>
<dbReference type="GO" id="GO:0015031">
    <property type="term" value="P:protein transport"/>
    <property type="evidence" value="ECO:0007669"/>
    <property type="project" value="UniProtKB-KW"/>
</dbReference>
<dbReference type="CDD" id="cd16326">
    <property type="entry name" value="LolB"/>
    <property type="match status" value="1"/>
</dbReference>
<dbReference type="Gene3D" id="2.50.20.10">
    <property type="entry name" value="Lipoprotein localisation LolA/LolB/LppX"/>
    <property type="match status" value="1"/>
</dbReference>
<dbReference type="HAMAP" id="MF_00233">
    <property type="entry name" value="LolB"/>
    <property type="match status" value="1"/>
</dbReference>
<dbReference type="InterPro" id="IPR029046">
    <property type="entry name" value="LolA/LolB/LppX"/>
</dbReference>
<dbReference type="InterPro" id="IPR004565">
    <property type="entry name" value="OM_lipoprot_LolB"/>
</dbReference>
<dbReference type="NCBIfam" id="TIGR00548">
    <property type="entry name" value="lolB"/>
    <property type="match status" value="1"/>
</dbReference>
<dbReference type="Pfam" id="PF03550">
    <property type="entry name" value="LolB"/>
    <property type="match status" value="1"/>
</dbReference>
<dbReference type="SUPFAM" id="SSF89392">
    <property type="entry name" value="Prokaryotic lipoproteins and lipoprotein localization factors"/>
    <property type="match status" value="1"/>
</dbReference>
<dbReference type="PROSITE" id="PS51257">
    <property type="entry name" value="PROKAR_LIPOPROTEIN"/>
    <property type="match status" value="1"/>
</dbReference>
<organism>
    <name type="scientific">Ectopseudomonas mendocina (strain ymp)</name>
    <name type="common">Pseudomonas mendocina</name>
    <dbReference type="NCBI Taxonomy" id="399739"/>
    <lineage>
        <taxon>Bacteria</taxon>
        <taxon>Pseudomonadati</taxon>
        <taxon>Pseudomonadota</taxon>
        <taxon>Gammaproteobacteria</taxon>
        <taxon>Pseudomonadales</taxon>
        <taxon>Pseudomonadaceae</taxon>
        <taxon>Ectopseudomonas</taxon>
    </lineage>
</organism>
<proteinExistence type="inferred from homology"/>
<sequence>MLRHLLVFSLIALLAGCAGLTSREALEGQGNPAQWQIHKQQISQLDGWQINGKIGIRAPQDSGSATLFWLQRQDYYDIRLSGPLGGGAARLTGRPGDILLEVSNRGRFKAESPEALLREQLRLDLPVSNLLWWIRGLPAPDSRSRLTLDADSHLARLEQDGWQVEYQRYVEQNGYALPERLKLYGQDLEVTLVIKDWQPRQLGQ</sequence>
<feature type="signal peptide" evidence="1">
    <location>
        <begin position="1"/>
        <end position="16"/>
    </location>
</feature>
<feature type="chain" id="PRO_0000336614" description="Outer-membrane lipoprotein LolB">
    <location>
        <begin position="17"/>
        <end position="204"/>
    </location>
</feature>
<feature type="lipid moiety-binding region" description="N-palmitoyl cysteine" evidence="1">
    <location>
        <position position="17"/>
    </location>
</feature>
<feature type="lipid moiety-binding region" description="S-diacylglycerol cysteine" evidence="1">
    <location>
        <position position="17"/>
    </location>
</feature>